<organism>
    <name type="scientific">Crocosphaera subtropica (strain ATCC 51142 / BH68)</name>
    <name type="common">Cyanothece sp. (strain ATCC 51142)</name>
    <dbReference type="NCBI Taxonomy" id="43989"/>
    <lineage>
        <taxon>Bacteria</taxon>
        <taxon>Bacillati</taxon>
        <taxon>Cyanobacteriota</taxon>
        <taxon>Cyanophyceae</taxon>
        <taxon>Oscillatoriophycideae</taxon>
        <taxon>Chroococcales</taxon>
        <taxon>Aphanothecaceae</taxon>
        <taxon>Crocosphaera</taxon>
        <taxon>Crocosphaera subtropica</taxon>
    </lineage>
</organism>
<sequence length="446" mass="49054">MANVIVIGAQWGDEGKGKITDLLSRSADVVVRPQGGVNAGHTIVVQGQTFKLHLIPSGILYPETECIIGSGTVIDPKVLLEELGQLKSLNVATDNLFISQTAHITMPYHRLFDQASEQRRGEKKIGTTGRGIGPTYADKSERTGIRVVDLMNPDELQEKLEWTINYKNVILEKLYNLDPLDPKVVIEEYINYADQLRPYVIDSSLKIYEAIQERKNILFEGAQGTLLDLDHGTYPYVTSSNPIAGGACVGSGIGPTVIDRVIGVAKAYTTRVGEGPFPTELHGDIGQQLCDRGAEFGTTTGRRRRCGWFDAVIGRYAVRVNGLDCLAITKLDVLDELAEIKVCTAYELDGQTCHHFPSNASEFARCTPIYETLPGWQQSTENCRSLEDLPKEALDYLKFLAELMEVSIAIVSLGASRDQTIIVEDPIHGPKRALLDENGDPVTTHE</sequence>
<gene>
    <name evidence="1" type="primary">purA</name>
    <name type="ordered locus">cce_4221</name>
</gene>
<evidence type="ECO:0000255" key="1">
    <source>
        <dbReference type="HAMAP-Rule" id="MF_00011"/>
    </source>
</evidence>
<proteinExistence type="inferred from homology"/>
<accession>B1WSJ0</accession>
<comment type="function">
    <text evidence="1">Plays an important role in the de novo pathway of purine nucleotide biosynthesis. Catalyzes the first committed step in the biosynthesis of AMP from IMP.</text>
</comment>
<comment type="catalytic activity">
    <reaction evidence="1">
        <text>IMP + L-aspartate + GTP = N(6)-(1,2-dicarboxyethyl)-AMP + GDP + phosphate + 2 H(+)</text>
        <dbReference type="Rhea" id="RHEA:15753"/>
        <dbReference type="ChEBI" id="CHEBI:15378"/>
        <dbReference type="ChEBI" id="CHEBI:29991"/>
        <dbReference type="ChEBI" id="CHEBI:37565"/>
        <dbReference type="ChEBI" id="CHEBI:43474"/>
        <dbReference type="ChEBI" id="CHEBI:57567"/>
        <dbReference type="ChEBI" id="CHEBI:58053"/>
        <dbReference type="ChEBI" id="CHEBI:58189"/>
        <dbReference type="EC" id="6.3.4.4"/>
    </reaction>
</comment>
<comment type="cofactor">
    <cofactor evidence="1">
        <name>Mg(2+)</name>
        <dbReference type="ChEBI" id="CHEBI:18420"/>
    </cofactor>
    <text evidence="1">Binds 1 Mg(2+) ion per subunit.</text>
</comment>
<comment type="pathway">
    <text evidence="1">Purine metabolism; AMP biosynthesis via de novo pathway; AMP from IMP: step 1/2.</text>
</comment>
<comment type="subunit">
    <text evidence="1">Homodimer.</text>
</comment>
<comment type="subcellular location">
    <subcellularLocation>
        <location evidence="1">Cytoplasm</location>
    </subcellularLocation>
</comment>
<comment type="similarity">
    <text evidence="1">Belongs to the adenylosuccinate synthetase family.</text>
</comment>
<name>PURA_CROS5</name>
<protein>
    <recommendedName>
        <fullName evidence="1">Adenylosuccinate synthetase</fullName>
        <shortName evidence="1">AMPSase</shortName>
        <shortName evidence="1">AdSS</shortName>
        <ecNumber evidence="1">6.3.4.4</ecNumber>
    </recommendedName>
    <alternativeName>
        <fullName evidence="1">IMP--aspartate ligase</fullName>
    </alternativeName>
</protein>
<reference key="1">
    <citation type="journal article" date="2008" name="Proc. Natl. Acad. Sci. U.S.A.">
        <title>The genome of Cyanothece 51142, a unicellular diazotrophic cyanobacterium important in the marine nitrogen cycle.</title>
        <authorList>
            <person name="Welsh E.A."/>
            <person name="Liberton M."/>
            <person name="Stoeckel J."/>
            <person name="Loh T."/>
            <person name="Elvitigala T."/>
            <person name="Wang C."/>
            <person name="Wollam A."/>
            <person name="Fulton R.S."/>
            <person name="Clifton S.W."/>
            <person name="Jacobs J.M."/>
            <person name="Aurora R."/>
            <person name="Ghosh B.K."/>
            <person name="Sherman L.A."/>
            <person name="Smith R.D."/>
            <person name="Wilson R.K."/>
            <person name="Pakrasi H.B."/>
        </authorList>
    </citation>
    <scope>NUCLEOTIDE SEQUENCE [LARGE SCALE GENOMIC DNA]</scope>
    <source>
        <strain>ATCC 51142 / BH68</strain>
    </source>
</reference>
<keyword id="KW-0963">Cytoplasm</keyword>
<keyword id="KW-0342">GTP-binding</keyword>
<keyword id="KW-0436">Ligase</keyword>
<keyword id="KW-0460">Magnesium</keyword>
<keyword id="KW-0479">Metal-binding</keyword>
<keyword id="KW-0547">Nucleotide-binding</keyword>
<keyword id="KW-0658">Purine biosynthesis</keyword>
<keyword id="KW-1185">Reference proteome</keyword>
<dbReference type="EC" id="6.3.4.4" evidence="1"/>
<dbReference type="EMBL" id="CP000806">
    <property type="protein sequence ID" value="ACB53569.1"/>
    <property type="molecule type" value="Genomic_DNA"/>
</dbReference>
<dbReference type="RefSeq" id="WP_009543706.1">
    <property type="nucleotide sequence ID" value="NC_010546.1"/>
</dbReference>
<dbReference type="SMR" id="B1WSJ0"/>
<dbReference type="STRING" id="43989.cce_4221"/>
<dbReference type="KEGG" id="cyt:cce_4221"/>
<dbReference type="eggNOG" id="COG0104">
    <property type="taxonomic scope" value="Bacteria"/>
</dbReference>
<dbReference type="HOGENOM" id="CLU_029848_0_0_3"/>
<dbReference type="OrthoDB" id="9807553at2"/>
<dbReference type="UniPathway" id="UPA00075">
    <property type="reaction ID" value="UER00335"/>
</dbReference>
<dbReference type="Proteomes" id="UP000001203">
    <property type="component" value="Chromosome circular"/>
</dbReference>
<dbReference type="GO" id="GO:0005737">
    <property type="term" value="C:cytoplasm"/>
    <property type="evidence" value="ECO:0007669"/>
    <property type="project" value="UniProtKB-SubCell"/>
</dbReference>
<dbReference type="GO" id="GO:0004019">
    <property type="term" value="F:adenylosuccinate synthase activity"/>
    <property type="evidence" value="ECO:0007669"/>
    <property type="project" value="UniProtKB-UniRule"/>
</dbReference>
<dbReference type="GO" id="GO:0005525">
    <property type="term" value="F:GTP binding"/>
    <property type="evidence" value="ECO:0007669"/>
    <property type="project" value="UniProtKB-UniRule"/>
</dbReference>
<dbReference type="GO" id="GO:0000287">
    <property type="term" value="F:magnesium ion binding"/>
    <property type="evidence" value="ECO:0007669"/>
    <property type="project" value="UniProtKB-UniRule"/>
</dbReference>
<dbReference type="GO" id="GO:0044208">
    <property type="term" value="P:'de novo' AMP biosynthetic process"/>
    <property type="evidence" value="ECO:0007669"/>
    <property type="project" value="UniProtKB-UniRule"/>
</dbReference>
<dbReference type="GO" id="GO:0046040">
    <property type="term" value="P:IMP metabolic process"/>
    <property type="evidence" value="ECO:0007669"/>
    <property type="project" value="TreeGrafter"/>
</dbReference>
<dbReference type="CDD" id="cd03108">
    <property type="entry name" value="AdSS"/>
    <property type="match status" value="1"/>
</dbReference>
<dbReference type="FunFam" id="1.10.300.10:FF:000001">
    <property type="entry name" value="Adenylosuccinate synthetase"/>
    <property type="match status" value="1"/>
</dbReference>
<dbReference type="FunFam" id="3.90.170.10:FF:000001">
    <property type="entry name" value="Adenylosuccinate synthetase"/>
    <property type="match status" value="1"/>
</dbReference>
<dbReference type="Gene3D" id="3.40.440.10">
    <property type="entry name" value="Adenylosuccinate Synthetase, subunit A, domain 1"/>
    <property type="match status" value="1"/>
</dbReference>
<dbReference type="Gene3D" id="1.10.300.10">
    <property type="entry name" value="Adenylosuccinate Synthetase, subunit A, domain 2"/>
    <property type="match status" value="1"/>
</dbReference>
<dbReference type="Gene3D" id="3.90.170.10">
    <property type="entry name" value="Adenylosuccinate Synthetase, subunit A, domain 3"/>
    <property type="match status" value="1"/>
</dbReference>
<dbReference type="HAMAP" id="MF_00011">
    <property type="entry name" value="Adenylosucc_synth"/>
    <property type="match status" value="1"/>
</dbReference>
<dbReference type="InterPro" id="IPR018220">
    <property type="entry name" value="Adenylosuccin_syn_GTP-bd"/>
</dbReference>
<dbReference type="InterPro" id="IPR033128">
    <property type="entry name" value="Adenylosuccin_syn_Lys_AS"/>
</dbReference>
<dbReference type="InterPro" id="IPR042109">
    <property type="entry name" value="Adenylosuccinate_synth_dom1"/>
</dbReference>
<dbReference type="InterPro" id="IPR042110">
    <property type="entry name" value="Adenylosuccinate_synth_dom2"/>
</dbReference>
<dbReference type="InterPro" id="IPR042111">
    <property type="entry name" value="Adenylosuccinate_synth_dom3"/>
</dbReference>
<dbReference type="InterPro" id="IPR001114">
    <property type="entry name" value="Adenylosuccinate_synthetase"/>
</dbReference>
<dbReference type="InterPro" id="IPR027417">
    <property type="entry name" value="P-loop_NTPase"/>
</dbReference>
<dbReference type="NCBIfam" id="NF002223">
    <property type="entry name" value="PRK01117.1"/>
    <property type="match status" value="1"/>
</dbReference>
<dbReference type="NCBIfam" id="TIGR00184">
    <property type="entry name" value="purA"/>
    <property type="match status" value="1"/>
</dbReference>
<dbReference type="PANTHER" id="PTHR11846">
    <property type="entry name" value="ADENYLOSUCCINATE SYNTHETASE"/>
    <property type="match status" value="1"/>
</dbReference>
<dbReference type="PANTHER" id="PTHR11846:SF0">
    <property type="entry name" value="ADENYLOSUCCINATE SYNTHETASE"/>
    <property type="match status" value="1"/>
</dbReference>
<dbReference type="Pfam" id="PF00709">
    <property type="entry name" value="Adenylsucc_synt"/>
    <property type="match status" value="1"/>
</dbReference>
<dbReference type="SMART" id="SM00788">
    <property type="entry name" value="Adenylsucc_synt"/>
    <property type="match status" value="1"/>
</dbReference>
<dbReference type="SUPFAM" id="SSF52540">
    <property type="entry name" value="P-loop containing nucleoside triphosphate hydrolases"/>
    <property type="match status" value="1"/>
</dbReference>
<dbReference type="PROSITE" id="PS01266">
    <property type="entry name" value="ADENYLOSUCCIN_SYN_1"/>
    <property type="match status" value="1"/>
</dbReference>
<dbReference type="PROSITE" id="PS00513">
    <property type="entry name" value="ADENYLOSUCCIN_SYN_2"/>
    <property type="match status" value="1"/>
</dbReference>
<feature type="chain" id="PRO_1000089285" description="Adenylosuccinate synthetase">
    <location>
        <begin position="1"/>
        <end position="446"/>
    </location>
</feature>
<feature type="active site" description="Proton acceptor" evidence="1">
    <location>
        <position position="13"/>
    </location>
</feature>
<feature type="active site" description="Proton donor" evidence="1">
    <location>
        <position position="41"/>
    </location>
</feature>
<feature type="binding site" evidence="1">
    <location>
        <begin position="12"/>
        <end position="18"/>
    </location>
    <ligand>
        <name>GTP</name>
        <dbReference type="ChEBI" id="CHEBI:37565"/>
    </ligand>
</feature>
<feature type="binding site" description="in other chain" evidence="1">
    <location>
        <begin position="13"/>
        <end position="16"/>
    </location>
    <ligand>
        <name>IMP</name>
        <dbReference type="ChEBI" id="CHEBI:58053"/>
        <note>ligand shared between dimeric partners</note>
    </ligand>
</feature>
<feature type="binding site" evidence="1">
    <location>
        <position position="13"/>
    </location>
    <ligand>
        <name>Mg(2+)</name>
        <dbReference type="ChEBI" id="CHEBI:18420"/>
    </ligand>
</feature>
<feature type="binding site" description="in other chain" evidence="1">
    <location>
        <begin position="38"/>
        <end position="41"/>
    </location>
    <ligand>
        <name>IMP</name>
        <dbReference type="ChEBI" id="CHEBI:58053"/>
        <note>ligand shared between dimeric partners</note>
    </ligand>
</feature>
<feature type="binding site" evidence="1">
    <location>
        <begin position="40"/>
        <end position="42"/>
    </location>
    <ligand>
        <name>GTP</name>
        <dbReference type="ChEBI" id="CHEBI:37565"/>
    </ligand>
</feature>
<feature type="binding site" evidence="1">
    <location>
        <position position="40"/>
    </location>
    <ligand>
        <name>Mg(2+)</name>
        <dbReference type="ChEBI" id="CHEBI:18420"/>
    </ligand>
</feature>
<feature type="binding site" description="in other chain" evidence="1">
    <location>
        <position position="128"/>
    </location>
    <ligand>
        <name>IMP</name>
        <dbReference type="ChEBI" id="CHEBI:58053"/>
        <note>ligand shared between dimeric partners</note>
    </ligand>
</feature>
<feature type="binding site" evidence="1">
    <location>
        <position position="142"/>
    </location>
    <ligand>
        <name>IMP</name>
        <dbReference type="ChEBI" id="CHEBI:58053"/>
        <note>ligand shared between dimeric partners</note>
    </ligand>
</feature>
<feature type="binding site" description="in other chain" evidence="1">
    <location>
        <position position="223"/>
    </location>
    <ligand>
        <name>IMP</name>
        <dbReference type="ChEBI" id="CHEBI:58053"/>
        <note>ligand shared between dimeric partners</note>
    </ligand>
</feature>
<feature type="binding site" description="in other chain" evidence="1">
    <location>
        <position position="238"/>
    </location>
    <ligand>
        <name>IMP</name>
        <dbReference type="ChEBI" id="CHEBI:58053"/>
        <note>ligand shared between dimeric partners</note>
    </ligand>
</feature>
<feature type="binding site" evidence="1">
    <location>
        <begin position="298"/>
        <end position="304"/>
    </location>
    <ligand>
        <name>substrate</name>
    </ligand>
</feature>
<feature type="binding site" description="in other chain" evidence="1">
    <location>
        <position position="302"/>
    </location>
    <ligand>
        <name>IMP</name>
        <dbReference type="ChEBI" id="CHEBI:58053"/>
        <note>ligand shared between dimeric partners</note>
    </ligand>
</feature>
<feature type="binding site" evidence="1">
    <location>
        <position position="304"/>
    </location>
    <ligand>
        <name>GTP</name>
        <dbReference type="ChEBI" id="CHEBI:37565"/>
    </ligand>
</feature>
<feature type="binding site" evidence="1">
    <location>
        <begin position="330"/>
        <end position="332"/>
    </location>
    <ligand>
        <name>GTP</name>
        <dbReference type="ChEBI" id="CHEBI:37565"/>
    </ligand>
</feature>
<feature type="binding site" evidence="1">
    <location>
        <begin position="412"/>
        <end position="414"/>
    </location>
    <ligand>
        <name>GTP</name>
        <dbReference type="ChEBI" id="CHEBI:37565"/>
    </ligand>
</feature>